<evidence type="ECO:0000255" key="1">
    <source>
        <dbReference type="HAMAP-Rule" id="MF_00440"/>
    </source>
</evidence>
<dbReference type="EMBL" id="CP001113">
    <property type="protein sequence ID" value="ACF65500.1"/>
    <property type="molecule type" value="Genomic_DNA"/>
</dbReference>
<dbReference type="RefSeq" id="WP_000543533.1">
    <property type="nucleotide sequence ID" value="NZ_CCMR01000003.1"/>
</dbReference>
<dbReference type="SMR" id="B4SWQ7"/>
<dbReference type="GeneID" id="66754886"/>
<dbReference type="KEGG" id="see:SNSL254_A0462"/>
<dbReference type="HOGENOM" id="CLU_108412_0_0_6"/>
<dbReference type="Proteomes" id="UP000008824">
    <property type="component" value="Chromosome"/>
</dbReference>
<dbReference type="GO" id="GO:0005524">
    <property type="term" value="F:ATP binding"/>
    <property type="evidence" value="ECO:0007669"/>
    <property type="project" value="UniProtKB-KW"/>
</dbReference>
<dbReference type="GO" id="GO:0003677">
    <property type="term" value="F:DNA binding"/>
    <property type="evidence" value="ECO:0007669"/>
    <property type="project" value="UniProtKB-KW"/>
</dbReference>
<dbReference type="GO" id="GO:0008270">
    <property type="term" value="F:zinc ion binding"/>
    <property type="evidence" value="ECO:0007669"/>
    <property type="project" value="UniProtKB-UniRule"/>
</dbReference>
<dbReference type="GO" id="GO:0045892">
    <property type="term" value="P:negative regulation of DNA-templated transcription"/>
    <property type="evidence" value="ECO:0007669"/>
    <property type="project" value="UniProtKB-UniRule"/>
</dbReference>
<dbReference type="HAMAP" id="MF_00440">
    <property type="entry name" value="NrdR"/>
    <property type="match status" value="1"/>
</dbReference>
<dbReference type="InterPro" id="IPR005144">
    <property type="entry name" value="ATP-cone_dom"/>
</dbReference>
<dbReference type="InterPro" id="IPR055173">
    <property type="entry name" value="NrdR-like_N"/>
</dbReference>
<dbReference type="InterPro" id="IPR003796">
    <property type="entry name" value="RNR_NrdR-like"/>
</dbReference>
<dbReference type="NCBIfam" id="TIGR00244">
    <property type="entry name" value="transcriptional regulator NrdR"/>
    <property type="match status" value="1"/>
</dbReference>
<dbReference type="PANTHER" id="PTHR30455">
    <property type="entry name" value="TRANSCRIPTIONAL REPRESSOR NRDR"/>
    <property type="match status" value="1"/>
</dbReference>
<dbReference type="PANTHER" id="PTHR30455:SF2">
    <property type="entry name" value="TRANSCRIPTIONAL REPRESSOR NRDR"/>
    <property type="match status" value="1"/>
</dbReference>
<dbReference type="Pfam" id="PF03477">
    <property type="entry name" value="ATP-cone"/>
    <property type="match status" value="1"/>
</dbReference>
<dbReference type="Pfam" id="PF22811">
    <property type="entry name" value="Zn_ribbon_NrdR"/>
    <property type="match status" value="1"/>
</dbReference>
<dbReference type="PROSITE" id="PS51161">
    <property type="entry name" value="ATP_CONE"/>
    <property type="match status" value="1"/>
</dbReference>
<accession>B4SWQ7</accession>
<feature type="chain" id="PRO_1000124545" description="Transcriptional repressor NrdR">
    <location>
        <begin position="1"/>
        <end position="149"/>
    </location>
</feature>
<feature type="domain" description="ATP-cone" evidence="1">
    <location>
        <begin position="49"/>
        <end position="139"/>
    </location>
</feature>
<feature type="zinc finger region" evidence="1">
    <location>
        <begin position="3"/>
        <end position="34"/>
    </location>
</feature>
<reference key="1">
    <citation type="journal article" date="2011" name="J. Bacteriol.">
        <title>Comparative genomics of 28 Salmonella enterica isolates: evidence for CRISPR-mediated adaptive sublineage evolution.</title>
        <authorList>
            <person name="Fricke W.F."/>
            <person name="Mammel M.K."/>
            <person name="McDermott P.F."/>
            <person name="Tartera C."/>
            <person name="White D.G."/>
            <person name="Leclerc J.E."/>
            <person name="Ravel J."/>
            <person name="Cebula T.A."/>
        </authorList>
    </citation>
    <scope>NUCLEOTIDE SEQUENCE [LARGE SCALE GENOMIC DNA]</scope>
    <source>
        <strain>SL254</strain>
    </source>
</reference>
<proteinExistence type="inferred from homology"/>
<name>NRDR_SALNS</name>
<organism>
    <name type="scientific">Salmonella newport (strain SL254)</name>
    <dbReference type="NCBI Taxonomy" id="423368"/>
    <lineage>
        <taxon>Bacteria</taxon>
        <taxon>Pseudomonadati</taxon>
        <taxon>Pseudomonadota</taxon>
        <taxon>Gammaproteobacteria</taxon>
        <taxon>Enterobacterales</taxon>
        <taxon>Enterobacteriaceae</taxon>
        <taxon>Salmonella</taxon>
    </lineage>
</organism>
<comment type="function">
    <text evidence="1">Negatively regulates transcription of bacterial ribonucleotide reductase nrd genes and operons by binding to NrdR-boxes.</text>
</comment>
<comment type="cofactor">
    <cofactor evidence="1">
        <name>Zn(2+)</name>
        <dbReference type="ChEBI" id="CHEBI:29105"/>
    </cofactor>
    <text evidence="1">Binds 1 zinc ion.</text>
</comment>
<comment type="similarity">
    <text evidence="1">Belongs to the NrdR family.</text>
</comment>
<sequence length="149" mass="17198">MHCPFCFAVDTKVIDSRLVGEGSSVRRRRQCLVCNERFTTFEVAELVMPRVIKSNDVREPFNEDKLRSGMLRALEKRPVSADDVEMALNHIKSQLRATGEREVPSKMIGNLVMEQLKKLDKVAYIRFASVYRSFEDIKDFGEEIARLQD</sequence>
<gene>
    <name evidence="1" type="primary">nrdR</name>
    <name type="ordered locus">SNSL254_A0462</name>
</gene>
<keyword id="KW-0067">ATP-binding</keyword>
<keyword id="KW-0238">DNA-binding</keyword>
<keyword id="KW-0479">Metal-binding</keyword>
<keyword id="KW-0547">Nucleotide-binding</keyword>
<keyword id="KW-0678">Repressor</keyword>
<keyword id="KW-0804">Transcription</keyword>
<keyword id="KW-0805">Transcription regulation</keyword>
<keyword id="KW-0862">Zinc</keyword>
<keyword id="KW-0863">Zinc-finger</keyword>
<protein>
    <recommendedName>
        <fullName evidence="1">Transcriptional repressor NrdR</fullName>
    </recommendedName>
</protein>